<reference key="1">
    <citation type="journal article" date="2004" name="Nat. Genet.">
        <title>Complete sequencing and characterization of 21,243 full-length human cDNAs.</title>
        <authorList>
            <person name="Ota T."/>
            <person name="Suzuki Y."/>
            <person name="Nishikawa T."/>
            <person name="Otsuki T."/>
            <person name="Sugiyama T."/>
            <person name="Irie R."/>
            <person name="Wakamatsu A."/>
            <person name="Hayashi K."/>
            <person name="Sato H."/>
            <person name="Nagai K."/>
            <person name="Kimura K."/>
            <person name="Makita H."/>
            <person name="Sekine M."/>
            <person name="Obayashi M."/>
            <person name="Nishi T."/>
            <person name="Shibahara T."/>
            <person name="Tanaka T."/>
            <person name="Ishii S."/>
            <person name="Yamamoto J."/>
            <person name="Saito K."/>
            <person name="Kawai Y."/>
            <person name="Isono Y."/>
            <person name="Nakamura Y."/>
            <person name="Nagahari K."/>
            <person name="Murakami K."/>
            <person name="Yasuda T."/>
            <person name="Iwayanagi T."/>
            <person name="Wagatsuma M."/>
            <person name="Shiratori A."/>
            <person name="Sudo H."/>
            <person name="Hosoiri T."/>
            <person name="Kaku Y."/>
            <person name="Kodaira H."/>
            <person name="Kondo H."/>
            <person name="Sugawara M."/>
            <person name="Takahashi M."/>
            <person name="Kanda K."/>
            <person name="Yokoi T."/>
            <person name="Furuya T."/>
            <person name="Kikkawa E."/>
            <person name="Omura Y."/>
            <person name="Abe K."/>
            <person name="Kamihara K."/>
            <person name="Katsuta N."/>
            <person name="Sato K."/>
            <person name="Tanikawa M."/>
            <person name="Yamazaki M."/>
            <person name="Ninomiya K."/>
            <person name="Ishibashi T."/>
            <person name="Yamashita H."/>
            <person name="Murakawa K."/>
            <person name="Fujimori K."/>
            <person name="Tanai H."/>
            <person name="Kimata M."/>
            <person name="Watanabe M."/>
            <person name="Hiraoka S."/>
            <person name="Chiba Y."/>
            <person name="Ishida S."/>
            <person name="Ono Y."/>
            <person name="Takiguchi S."/>
            <person name="Watanabe S."/>
            <person name="Yosida M."/>
            <person name="Hotuta T."/>
            <person name="Kusano J."/>
            <person name="Kanehori K."/>
            <person name="Takahashi-Fujii A."/>
            <person name="Hara H."/>
            <person name="Tanase T.-O."/>
            <person name="Nomura Y."/>
            <person name="Togiya S."/>
            <person name="Komai F."/>
            <person name="Hara R."/>
            <person name="Takeuchi K."/>
            <person name="Arita M."/>
            <person name="Imose N."/>
            <person name="Musashino K."/>
            <person name="Yuuki H."/>
            <person name="Oshima A."/>
            <person name="Sasaki N."/>
            <person name="Aotsuka S."/>
            <person name="Yoshikawa Y."/>
            <person name="Matsunawa H."/>
            <person name="Ichihara T."/>
            <person name="Shiohata N."/>
            <person name="Sano S."/>
            <person name="Moriya S."/>
            <person name="Momiyama H."/>
            <person name="Satoh N."/>
            <person name="Takami S."/>
            <person name="Terashima Y."/>
            <person name="Suzuki O."/>
            <person name="Nakagawa S."/>
            <person name="Senoh A."/>
            <person name="Mizoguchi H."/>
            <person name="Goto Y."/>
            <person name="Shimizu F."/>
            <person name="Wakebe H."/>
            <person name="Hishigaki H."/>
            <person name="Watanabe T."/>
            <person name="Sugiyama A."/>
            <person name="Takemoto M."/>
            <person name="Kawakami B."/>
            <person name="Yamazaki M."/>
            <person name="Watanabe K."/>
            <person name="Kumagai A."/>
            <person name="Itakura S."/>
            <person name="Fukuzumi Y."/>
            <person name="Fujimori Y."/>
            <person name="Komiyama M."/>
            <person name="Tashiro H."/>
            <person name="Tanigami A."/>
            <person name="Fujiwara T."/>
            <person name="Ono T."/>
            <person name="Yamada K."/>
            <person name="Fujii Y."/>
            <person name="Ozaki K."/>
            <person name="Hirao M."/>
            <person name="Ohmori Y."/>
            <person name="Kawabata A."/>
            <person name="Hikiji T."/>
            <person name="Kobatake N."/>
            <person name="Inagaki H."/>
            <person name="Ikema Y."/>
            <person name="Okamoto S."/>
            <person name="Okitani R."/>
            <person name="Kawakami T."/>
            <person name="Noguchi S."/>
            <person name="Itoh T."/>
            <person name="Shigeta K."/>
            <person name="Senba T."/>
            <person name="Matsumura K."/>
            <person name="Nakajima Y."/>
            <person name="Mizuno T."/>
            <person name="Morinaga M."/>
            <person name="Sasaki M."/>
            <person name="Togashi T."/>
            <person name="Oyama M."/>
            <person name="Hata H."/>
            <person name="Watanabe M."/>
            <person name="Komatsu T."/>
            <person name="Mizushima-Sugano J."/>
            <person name="Satoh T."/>
            <person name="Shirai Y."/>
            <person name="Takahashi Y."/>
            <person name="Nakagawa K."/>
            <person name="Okumura K."/>
            <person name="Nagase T."/>
            <person name="Nomura N."/>
            <person name="Kikuchi H."/>
            <person name="Masuho Y."/>
            <person name="Yamashita R."/>
            <person name="Nakai K."/>
            <person name="Yada T."/>
            <person name="Nakamura Y."/>
            <person name="Ohara O."/>
            <person name="Isogai T."/>
            <person name="Sugano S."/>
        </authorList>
    </citation>
    <scope>NUCLEOTIDE SEQUENCE [LARGE SCALE MRNA] (ISOFORMS 1 AND 2)</scope>
    <source>
        <tissue>Brain</tissue>
        <tissue>Trachea</tissue>
    </source>
</reference>
<reference key="2">
    <citation type="journal article" date="2006" name="Nature">
        <title>Analysis of the DNA sequence and duplication history of human chromosome 15.</title>
        <authorList>
            <person name="Zody M.C."/>
            <person name="Garber M."/>
            <person name="Sharpe T."/>
            <person name="Young S.K."/>
            <person name="Rowen L."/>
            <person name="O'Neill K."/>
            <person name="Whittaker C.A."/>
            <person name="Kamal M."/>
            <person name="Chang J.L."/>
            <person name="Cuomo C.A."/>
            <person name="Dewar K."/>
            <person name="FitzGerald M.G."/>
            <person name="Kodira C.D."/>
            <person name="Madan A."/>
            <person name="Qin S."/>
            <person name="Yang X."/>
            <person name="Abbasi N."/>
            <person name="Abouelleil A."/>
            <person name="Arachchi H.M."/>
            <person name="Baradarani L."/>
            <person name="Birditt B."/>
            <person name="Bloom S."/>
            <person name="Bloom T."/>
            <person name="Borowsky M.L."/>
            <person name="Burke J."/>
            <person name="Butler J."/>
            <person name="Cook A."/>
            <person name="DeArellano K."/>
            <person name="DeCaprio D."/>
            <person name="Dorris L. III"/>
            <person name="Dors M."/>
            <person name="Eichler E.E."/>
            <person name="Engels R."/>
            <person name="Fahey J."/>
            <person name="Fleetwood P."/>
            <person name="Friedman C."/>
            <person name="Gearin G."/>
            <person name="Hall J.L."/>
            <person name="Hensley G."/>
            <person name="Johnson E."/>
            <person name="Jones C."/>
            <person name="Kamat A."/>
            <person name="Kaur A."/>
            <person name="Locke D.P."/>
            <person name="Madan A."/>
            <person name="Munson G."/>
            <person name="Jaffe D.B."/>
            <person name="Lui A."/>
            <person name="Macdonald P."/>
            <person name="Mauceli E."/>
            <person name="Naylor J.W."/>
            <person name="Nesbitt R."/>
            <person name="Nicol R."/>
            <person name="O'Leary S.B."/>
            <person name="Ratcliffe A."/>
            <person name="Rounsley S."/>
            <person name="She X."/>
            <person name="Sneddon K.M.B."/>
            <person name="Stewart S."/>
            <person name="Sougnez C."/>
            <person name="Stone S.M."/>
            <person name="Topham K."/>
            <person name="Vincent D."/>
            <person name="Wang S."/>
            <person name="Zimmer A.R."/>
            <person name="Birren B.W."/>
            <person name="Hood L."/>
            <person name="Lander E.S."/>
            <person name="Nusbaum C."/>
        </authorList>
    </citation>
    <scope>NUCLEOTIDE SEQUENCE [LARGE SCALE GENOMIC DNA]</scope>
</reference>
<reference key="3">
    <citation type="submission" date="2005-07" db="EMBL/GenBank/DDBJ databases">
        <authorList>
            <person name="Mural R.J."/>
            <person name="Istrail S."/>
            <person name="Sutton G.G."/>
            <person name="Florea L."/>
            <person name="Halpern A.L."/>
            <person name="Mobarry C.M."/>
            <person name="Lippert R."/>
            <person name="Walenz B."/>
            <person name="Shatkay H."/>
            <person name="Dew I."/>
            <person name="Miller J.R."/>
            <person name="Flanigan M.J."/>
            <person name="Edwards N.J."/>
            <person name="Bolanos R."/>
            <person name="Fasulo D."/>
            <person name="Halldorsson B.V."/>
            <person name="Hannenhalli S."/>
            <person name="Turner R."/>
            <person name="Yooseph S."/>
            <person name="Lu F."/>
            <person name="Nusskern D.R."/>
            <person name="Shue B.C."/>
            <person name="Zheng X.H."/>
            <person name="Zhong F."/>
            <person name="Delcher A.L."/>
            <person name="Huson D.H."/>
            <person name="Kravitz S.A."/>
            <person name="Mouchard L."/>
            <person name="Reinert K."/>
            <person name="Remington K.A."/>
            <person name="Clark A.G."/>
            <person name="Waterman M.S."/>
            <person name="Eichler E.E."/>
            <person name="Adams M.D."/>
            <person name="Hunkapiller M.W."/>
            <person name="Myers E.W."/>
            <person name="Venter J.C."/>
        </authorList>
    </citation>
    <scope>NUCLEOTIDE SEQUENCE [LARGE SCALE GENOMIC DNA]</scope>
</reference>
<reference key="4">
    <citation type="journal article" date="2004" name="Genome Res.">
        <title>The status, quality, and expansion of the NIH full-length cDNA project: the Mammalian Gene Collection (MGC).</title>
        <authorList>
            <consortium name="The MGC Project Team"/>
        </authorList>
    </citation>
    <scope>NUCLEOTIDE SEQUENCE [LARGE SCALE MRNA] (ISOFORM 1)</scope>
    <source>
        <tissue>Brain</tissue>
    </source>
</reference>
<reference key="5">
    <citation type="journal article" date="2011" name="BMC Syst. Biol.">
        <title>Initial characterization of the human central proteome.</title>
        <authorList>
            <person name="Burkard T.R."/>
            <person name="Planyavsky M."/>
            <person name="Kaupe I."/>
            <person name="Breitwieser F.P."/>
            <person name="Buerckstuemmer T."/>
            <person name="Bennett K.L."/>
            <person name="Superti-Furga G."/>
            <person name="Colinge J."/>
        </authorList>
    </citation>
    <scope>IDENTIFICATION BY MASS SPECTROMETRY [LARGE SCALE ANALYSIS]</scope>
</reference>
<reference key="6">
    <citation type="journal article" date="2013" name="Cell Metab.">
        <title>Human CIA2A-FAM96A and CIA2B-FAM96B integrate iron homeostasis and maturation of different subsets of cytosolic-nuclear iron-sulfur proteins.</title>
        <authorList>
            <person name="Stehling O."/>
            <person name="Mascarenhas J."/>
            <person name="Vashisht A.A."/>
            <person name="Sheftel A.D."/>
            <person name="Niggemeyer B."/>
            <person name="Roesser R."/>
            <person name="Pierik A.J."/>
            <person name="Wohlschlegel J.A."/>
            <person name="Lill R."/>
        </authorList>
    </citation>
    <scope>FUNCTION</scope>
    <scope>IDENTIFICATION IN THE CIA COMPLEX</scope>
    <scope>INTERACTION WITH CIAO1 AND IREB2</scope>
</reference>
<reference key="7">
    <citation type="journal article" date="2018" name="Cell Metab.">
        <title>Human CIA2A-FAM96A and CIA2B-FAM96B Integrate Iron Homeostasis and Maturation of Different Subsets of Cytosolic-Nuclear Iron-Sulfur Proteins.</title>
        <authorList>
            <person name="Stehling O."/>
            <person name="Mascarenhas J."/>
            <person name="Vashisht A.A."/>
            <person name="Sheftel A.D."/>
            <person name="Niggemeyer B."/>
            <person name="Roesser R."/>
            <person name="Pierik A.J."/>
            <person name="Wohlschlegel J.A."/>
            <person name="Lill R."/>
        </authorList>
    </citation>
    <scope>ERRATUM OF PUBMED:23891004</scope>
</reference>
<reference key="8">
    <citation type="journal article" date="2015" name="Int. J. Cancer">
        <title>FAM96A is a novel pro-apoptotic tumor suppressor in gastrointestinal stromal tumors.</title>
        <authorList>
            <person name="Schwamb B."/>
            <person name="Pick R."/>
            <person name="Fernandez S.B."/>
            <person name="Voelp K."/>
            <person name="Heering J."/>
            <person name="Doetsch V."/>
            <person name="Boesser S."/>
            <person name="Jung J."/>
            <person name="Beinoraviciute-Kellner R."/>
            <person name="Wesely J."/>
            <person name="Zoernig I."/>
            <person name="Hammerschmidt M."/>
            <person name="Nowak M."/>
            <person name="Penzel R."/>
            <person name="Zatloukal K."/>
            <person name="Joos S."/>
            <person name="Rieker R.J."/>
            <person name="Agaimy A."/>
            <person name="Soeder S."/>
            <person name="Reid-Lombardo K.M."/>
            <person name="Kendrick M.L."/>
            <person name="Bardsley M.R."/>
            <person name="Hayashi Y."/>
            <person name="Asuzu D.T."/>
            <person name="Syed S.A."/>
            <person name="Ordog T."/>
            <person name="Zoernig M."/>
        </authorList>
    </citation>
    <scope>FUNCTION</scope>
    <scope>INTERACTION WITH APAF1</scope>
</reference>
<reference key="9">
    <citation type="journal article" date="2012" name="Acta Crystallogr. D">
        <title>The mammalian DUF59 protein Fam96a forms two distinct types of domain-swapped dimer.</title>
        <authorList>
            <person name="Chen K.E."/>
            <person name="Richards A.A."/>
            <person name="Ariffin J.K."/>
            <person name="Ross I.L."/>
            <person name="Sweet M.J."/>
            <person name="Kellie S."/>
            <person name="Kobe B."/>
            <person name="Martin J.L."/>
        </authorList>
    </citation>
    <scope>X-RAY CRYSTALLOGRAPHY (1.8 ANGSTROMS) OF 31-157</scope>
    <scope>SUBUNIT</scope>
    <scope>SUBCELLULAR LOCATION</scope>
    <scope>ZINC-BINDING SITES</scope>
    <scope>TISSUE SPECIFICITY</scope>
    <scope>INTERACTION WITH CIAO1</scope>
</reference>
<proteinExistence type="evidence at protein level"/>
<dbReference type="EMBL" id="AK026528">
    <property type="protein sequence ID" value="BAB15496.1"/>
    <property type="molecule type" value="mRNA"/>
</dbReference>
<dbReference type="EMBL" id="AK304202">
    <property type="protein sequence ID" value="BAH14131.1"/>
    <property type="molecule type" value="mRNA"/>
</dbReference>
<dbReference type="EMBL" id="AK312171">
    <property type="protein sequence ID" value="BAG35105.1"/>
    <property type="molecule type" value="mRNA"/>
</dbReference>
<dbReference type="EMBL" id="AC021541">
    <property type="status" value="NOT_ANNOTATED_CDS"/>
    <property type="molecule type" value="Genomic_DNA"/>
</dbReference>
<dbReference type="EMBL" id="CH471082">
    <property type="protein sequence ID" value="EAW77661.1"/>
    <property type="molecule type" value="Genomic_DNA"/>
</dbReference>
<dbReference type="EMBL" id="CH471082">
    <property type="protein sequence ID" value="EAW77662.1"/>
    <property type="molecule type" value="Genomic_DNA"/>
</dbReference>
<dbReference type="EMBL" id="BC008865">
    <property type="protein sequence ID" value="AAH08865.1"/>
    <property type="molecule type" value="mRNA"/>
</dbReference>
<dbReference type="CCDS" id="CCDS10189.1">
    <molecule id="Q9H5X1-1"/>
</dbReference>
<dbReference type="CCDS" id="CCDS45278.1">
    <molecule id="Q9H5X1-2"/>
</dbReference>
<dbReference type="RefSeq" id="NP_001014812.1">
    <molecule id="Q9H5X1-2"/>
    <property type="nucleotide sequence ID" value="NM_001014812.3"/>
</dbReference>
<dbReference type="RefSeq" id="NP_001276037.1">
    <molecule id="Q9H5X1-2"/>
    <property type="nucleotide sequence ID" value="NM_001289108.2"/>
</dbReference>
<dbReference type="RefSeq" id="NP_115607.1">
    <molecule id="Q9H5X1-1"/>
    <property type="nucleotide sequence ID" value="NM_032231.7"/>
</dbReference>
<dbReference type="PDB" id="2M5H">
    <property type="method" value="NMR"/>
    <property type="chains" value="A=28-160"/>
</dbReference>
<dbReference type="PDB" id="3UX2">
    <property type="method" value="X-ray"/>
    <property type="resolution" value="1.80 A"/>
    <property type="chains" value="A=31-157"/>
</dbReference>
<dbReference type="PDB" id="3UX3">
    <property type="method" value="X-ray"/>
    <property type="resolution" value="1.80 A"/>
    <property type="chains" value="A/B=31-157"/>
</dbReference>
<dbReference type="PDBsum" id="2M5H"/>
<dbReference type="PDBsum" id="3UX2"/>
<dbReference type="PDBsum" id="3UX3"/>
<dbReference type="BMRB" id="Q9H5X1"/>
<dbReference type="SMR" id="Q9H5X1"/>
<dbReference type="BioGRID" id="123939">
    <property type="interactions" value="197"/>
</dbReference>
<dbReference type="ComplexPortal" id="CPX-2840">
    <property type="entry name" value="CIAO1-CIAO2A-CIAO3 cytosolic iron-sulfur protein assembly complex"/>
</dbReference>
<dbReference type="FunCoup" id="Q9H5X1">
    <property type="interactions" value="1259"/>
</dbReference>
<dbReference type="IntAct" id="Q9H5X1">
    <property type="interactions" value="156"/>
</dbReference>
<dbReference type="MINT" id="Q9H5X1"/>
<dbReference type="STRING" id="9606.ENSP00000300030"/>
<dbReference type="ChEMBL" id="CHEMBL4295943"/>
<dbReference type="iPTMnet" id="Q9H5X1"/>
<dbReference type="MetOSite" id="Q9H5X1"/>
<dbReference type="PhosphoSitePlus" id="Q9H5X1"/>
<dbReference type="BioMuta" id="FAM96A"/>
<dbReference type="DMDM" id="20455359"/>
<dbReference type="jPOST" id="Q9H5X1"/>
<dbReference type="MassIVE" id="Q9H5X1"/>
<dbReference type="PaxDb" id="9606-ENSP00000300030"/>
<dbReference type="PeptideAtlas" id="Q9H5X1"/>
<dbReference type="ProteomicsDB" id="80937">
    <molecule id="Q9H5X1-1"/>
</dbReference>
<dbReference type="ProteomicsDB" id="80938">
    <molecule id="Q9H5X1-2"/>
</dbReference>
<dbReference type="Pumba" id="Q9H5X1"/>
<dbReference type="Antibodypedia" id="25761">
    <property type="antibodies" value="105 antibodies from 19 providers"/>
</dbReference>
<dbReference type="DNASU" id="84191"/>
<dbReference type="Ensembl" id="ENST00000300030.8">
    <molecule id="Q9H5X1-1"/>
    <property type="protein sequence ID" value="ENSP00000300030.3"/>
    <property type="gene ID" value="ENSG00000166797.12"/>
</dbReference>
<dbReference type="Ensembl" id="ENST00000380290.8">
    <molecule id="Q9H5X1-2"/>
    <property type="protein sequence ID" value="ENSP00000369644.3"/>
    <property type="gene ID" value="ENSG00000166797.12"/>
</dbReference>
<dbReference type="Ensembl" id="ENST00000557835.6">
    <molecule id="Q9H5X1-2"/>
    <property type="protein sequence ID" value="ENSP00000454079.1"/>
    <property type="gene ID" value="ENSG00000166797.12"/>
</dbReference>
<dbReference type="GeneID" id="84191"/>
<dbReference type="KEGG" id="hsa:84191"/>
<dbReference type="MANE-Select" id="ENST00000300030.8">
    <property type="protein sequence ID" value="ENSP00000300030.3"/>
    <property type="RefSeq nucleotide sequence ID" value="NM_032231.7"/>
    <property type="RefSeq protein sequence ID" value="NP_115607.1"/>
</dbReference>
<dbReference type="UCSC" id="uc002amt.3">
    <molecule id="Q9H5X1-1"/>
    <property type="organism name" value="human"/>
</dbReference>
<dbReference type="AGR" id="HGNC:26235"/>
<dbReference type="CTD" id="84191"/>
<dbReference type="DisGeNET" id="84191"/>
<dbReference type="GeneCards" id="CIAO2A"/>
<dbReference type="HGNC" id="HGNC:26235">
    <property type="gene designation" value="CIAO2A"/>
</dbReference>
<dbReference type="HPA" id="ENSG00000166797">
    <property type="expression patterns" value="Tissue enhanced (liver)"/>
</dbReference>
<dbReference type="MIM" id="618382">
    <property type="type" value="gene"/>
</dbReference>
<dbReference type="neXtProt" id="NX_Q9H5X1"/>
<dbReference type="OpenTargets" id="ENSG00000166797"/>
<dbReference type="PharmGKB" id="PA142671829"/>
<dbReference type="VEuPathDB" id="HostDB:ENSG00000166797"/>
<dbReference type="eggNOG" id="KOG3381">
    <property type="taxonomic scope" value="Eukaryota"/>
</dbReference>
<dbReference type="GeneTree" id="ENSGT00390000017697"/>
<dbReference type="HOGENOM" id="CLU_075876_4_0_1"/>
<dbReference type="InParanoid" id="Q9H5X1"/>
<dbReference type="OMA" id="HELGYRN"/>
<dbReference type="OrthoDB" id="2746at2759"/>
<dbReference type="PAN-GO" id="Q9H5X1">
    <property type="GO annotations" value="0 GO annotations based on evolutionary models"/>
</dbReference>
<dbReference type="PhylomeDB" id="Q9H5X1"/>
<dbReference type="TreeFam" id="TF323934"/>
<dbReference type="PathwayCommons" id="Q9H5X1"/>
<dbReference type="SignaLink" id="Q9H5X1"/>
<dbReference type="BioGRID-ORCS" id="84191">
    <property type="hits" value="113 hits in 1152 CRISPR screens"/>
</dbReference>
<dbReference type="ChiTaRS" id="FAM96A">
    <property type="organism name" value="human"/>
</dbReference>
<dbReference type="EvolutionaryTrace" id="Q9H5X1"/>
<dbReference type="GenomeRNAi" id="84191"/>
<dbReference type="Pharos" id="Q9H5X1">
    <property type="development level" value="Tbio"/>
</dbReference>
<dbReference type="PRO" id="PR:Q9H5X1"/>
<dbReference type="Proteomes" id="UP000005640">
    <property type="component" value="Chromosome 15"/>
</dbReference>
<dbReference type="RNAct" id="Q9H5X1">
    <property type="molecule type" value="protein"/>
</dbReference>
<dbReference type="Bgee" id="ENSG00000166797">
    <property type="expression patterns" value="Expressed in ileal mucosa and 187 other cell types or tissues"/>
</dbReference>
<dbReference type="ExpressionAtlas" id="Q9H5X1">
    <property type="expression patterns" value="baseline and differential"/>
</dbReference>
<dbReference type="GO" id="GO:0005829">
    <property type="term" value="C:cytosol"/>
    <property type="evidence" value="ECO:0000314"/>
    <property type="project" value="HPA"/>
</dbReference>
<dbReference type="GO" id="GO:0097361">
    <property type="term" value="C:cytosolic [4Fe-4S] assembly targeting complex"/>
    <property type="evidence" value="ECO:0000314"/>
    <property type="project" value="UniProtKB"/>
</dbReference>
<dbReference type="GO" id="GO:0005654">
    <property type="term" value="C:nucleoplasm"/>
    <property type="evidence" value="ECO:0000314"/>
    <property type="project" value="HPA"/>
</dbReference>
<dbReference type="GO" id="GO:0046872">
    <property type="term" value="F:metal ion binding"/>
    <property type="evidence" value="ECO:0007669"/>
    <property type="project" value="UniProtKB-KW"/>
</dbReference>
<dbReference type="GO" id="GO:0007059">
    <property type="term" value="P:chromosome segregation"/>
    <property type="evidence" value="ECO:0007669"/>
    <property type="project" value="UniProtKB-KW"/>
</dbReference>
<dbReference type="GO" id="GO:0051604">
    <property type="term" value="P:protein maturation"/>
    <property type="evidence" value="ECO:0000315"/>
    <property type="project" value="UniProtKB"/>
</dbReference>
<dbReference type="FunFam" id="3.30.300.130:FF:000004">
    <property type="entry name" value="cytosolic iron-sulfur assembly component 2A"/>
    <property type="match status" value="1"/>
</dbReference>
<dbReference type="Gene3D" id="6.10.250.1280">
    <property type="match status" value="1"/>
</dbReference>
<dbReference type="Gene3D" id="3.30.300.130">
    <property type="entry name" value="Fe-S cluster assembly (FSCA)"/>
    <property type="match status" value="1"/>
</dbReference>
<dbReference type="InterPro" id="IPR034904">
    <property type="entry name" value="FSCA_dom_sf"/>
</dbReference>
<dbReference type="InterPro" id="IPR039796">
    <property type="entry name" value="MIP18"/>
</dbReference>
<dbReference type="InterPro" id="IPR002744">
    <property type="entry name" value="MIP18-like"/>
</dbReference>
<dbReference type="PANTHER" id="PTHR12377:SF2">
    <property type="entry name" value="CYTOSOLIC IRON-SULFUR ASSEMBLY COMPONENT 2A"/>
    <property type="match status" value="1"/>
</dbReference>
<dbReference type="PANTHER" id="PTHR12377">
    <property type="entry name" value="CYTOSOLIC IRON-SULFUR ASSEMBLY COMPONENT 2B-RELATED"/>
    <property type="match status" value="1"/>
</dbReference>
<dbReference type="Pfam" id="PF01883">
    <property type="entry name" value="FeS_assembly_P"/>
    <property type="match status" value="1"/>
</dbReference>
<dbReference type="SUPFAM" id="SSF117916">
    <property type="entry name" value="Fe-S cluster assembly (FSCA) domain-like"/>
    <property type="match status" value="1"/>
</dbReference>
<comment type="function">
    <text evidence="1 3 4">Component of the cytosolic iron-sulfur protein assembly (CIA) complex, a multiprotein complex that mediates the incorporation of iron-sulfur cluster into extramitochondrial Fe/S proteins (PubMed:23891004). As a CIA complex component and in collaboration with CIAO1 specifically matures ACO1 and stabilizes IREB2, connecting cytosolic iron-sulfur protein maturation with cellular iron regulation (PubMed:23891004). May play a role in chromosome segregation through establishment of sister chromatid cohesion. May induce apoptosis in collaboration with APAF1 (PubMed:25716227).</text>
</comment>
<comment type="subunit">
    <text evidence="2 3 4">Monomer and homodimer (PubMed:22683786). Component of the CIA complex (PubMed:23891004). Interacts with CIAO1 (PubMed:22683786, PubMed:23891004). Interacts with IREB2 (PubMed:23891004). Interacts with APAF1 (PubMed:25716227).</text>
</comment>
<comment type="interaction">
    <interactant intactId="EBI-752069">
        <id>Q9H5X1</id>
    </interactant>
    <interactant intactId="EBI-1171525">
        <id>P02652</id>
        <label>APOA2</label>
    </interactant>
    <organismsDiffer>false</organismsDiffer>
    <experiments>3</experiments>
</comment>
<comment type="interaction">
    <interactant intactId="EBI-752069">
        <id>Q9H5X1</id>
    </interactant>
    <interactant intactId="EBI-725145">
        <id>O76071</id>
        <label>CIAO1</label>
    </interactant>
    <organismsDiffer>false</organismsDiffer>
    <experiments>19</experiments>
</comment>
<comment type="interaction">
    <interactant intactId="EBI-752069">
        <id>Q9H5X1</id>
    </interactant>
    <interactant intactId="EBI-1054315">
        <id>Q9NX76</id>
        <label>CMTM6</label>
    </interactant>
    <organismsDiffer>false</organismsDiffer>
    <experiments>3</experiments>
</comment>
<comment type="interaction">
    <interactant intactId="EBI-752069">
        <id>Q9H5X1</id>
    </interactant>
    <interactant intactId="EBI-6942903">
        <id>Q96BA8</id>
        <label>CREB3L1</label>
    </interactant>
    <organismsDiffer>false</organismsDiffer>
    <experiments>5</experiments>
</comment>
<comment type="interaction">
    <interactant intactId="EBI-752069">
        <id>Q9H5X1</id>
    </interactant>
    <interactant intactId="EBI-398977">
        <id>Q9BUN8</id>
        <label>DERL1</label>
    </interactant>
    <organismsDiffer>false</organismsDiffer>
    <experiments>3</experiments>
</comment>
<comment type="interaction">
    <interactant intactId="EBI-752069">
        <id>Q9H5X1</id>
    </interactant>
    <interactant intactId="EBI-12831978">
        <id>Q6ZPD8</id>
        <label>DGAT2L6</label>
    </interactant>
    <organismsDiffer>false</organismsDiffer>
    <experiments>3</experiments>
</comment>
<comment type="interaction">
    <interactant intactId="EBI-752069">
        <id>Q9H5X1</id>
    </interactant>
    <interactant intactId="EBI-8787095">
        <id>O00559</id>
        <label>EBAG9</label>
    </interactant>
    <organismsDiffer>false</organismsDiffer>
    <experiments>3</experiments>
</comment>
<comment type="interaction">
    <interactant intactId="EBI-752069">
        <id>Q9H5X1</id>
    </interactant>
    <interactant intactId="EBI-781551">
        <id>Q9Y282</id>
        <label>ERGIC3</label>
    </interactant>
    <organismsDiffer>false</organismsDiffer>
    <experiments>3</experiments>
</comment>
<comment type="interaction">
    <interactant intactId="EBI-752069">
        <id>Q9H5X1</id>
    </interactant>
    <interactant intactId="EBI-3918971">
        <id>Q9Y680</id>
        <label>FKBP7</label>
    </interactant>
    <organismsDiffer>false</organismsDiffer>
    <experiments>3</experiments>
</comment>
<comment type="interaction">
    <interactant intactId="EBI-752069">
        <id>Q9H5X1</id>
    </interactant>
    <interactant intactId="EBI-17458373">
        <id>P48165</id>
        <label>GJA8</label>
    </interactant>
    <organismsDiffer>false</organismsDiffer>
    <experiments>3</experiments>
</comment>
<comment type="interaction">
    <interactant intactId="EBI-752069">
        <id>Q9H5X1</id>
    </interactant>
    <interactant intactId="EBI-19954058">
        <id>O15499</id>
        <label>GSC2</label>
    </interactant>
    <organismsDiffer>false</organismsDiffer>
    <experiments>3</experiments>
</comment>
<comment type="interaction">
    <interactant intactId="EBI-752069">
        <id>Q9H5X1</id>
    </interactant>
    <interactant intactId="EBI-22452746">
        <id>Q9NZI2-2</id>
        <label>KCNIP1</label>
    </interactant>
    <organismsDiffer>false</organismsDiffer>
    <experiments>3</experiments>
</comment>
<comment type="interaction">
    <interactant intactId="EBI-752069">
        <id>Q9H5X1</id>
    </interactant>
    <interactant intactId="EBI-2830566">
        <id>Q9H400</id>
        <label>LIME1</label>
    </interactant>
    <organismsDiffer>false</organismsDiffer>
    <experiments>3</experiments>
</comment>
<comment type="interaction">
    <interactant intactId="EBI-752069">
        <id>Q9H5X1</id>
    </interactant>
    <interactant intactId="EBI-1050204">
        <id>Q5EB52</id>
        <label>MEST</label>
    </interactant>
    <organismsDiffer>false</organismsDiffer>
    <experiments>3</experiments>
</comment>
<comment type="interaction">
    <interactant intactId="EBI-752069">
        <id>Q9H5X1</id>
    </interactant>
    <interactant intactId="EBI-608347">
        <id>Q04941</id>
        <label>PLP2</label>
    </interactant>
    <organismsDiffer>false</organismsDiffer>
    <experiments>3</experiments>
</comment>
<comment type="interaction">
    <interactant intactId="EBI-752069">
        <id>Q9H5X1</id>
    </interactant>
    <interactant intactId="EBI-11721828">
        <id>Q8IY26</id>
        <label>PLPP6</label>
    </interactant>
    <organismsDiffer>false</organismsDiffer>
    <experiments>3</experiments>
</comment>
<comment type="interaction">
    <interactant intactId="EBI-752069">
        <id>Q9H5X1</id>
    </interactant>
    <interactant intactId="EBI-12955265">
        <id>Q96GM1</id>
        <label>PLPPR2</label>
    </interactant>
    <organismsDiffer>false</organismsDiffer>
    <experiments>3</experiments>
</comment>
<comment type="interaction">
    <interactant intactId="EBI-752069">
        <id>Q9H5X1</id>
    </interactant>
    <interactant intactId="EBI-2506064">
        <id>O60831</id>
        <label>PRAF2</label>
    </interactant>
    <organismsDiffer>false</organismsDiffer>
    <experiments>3</experiments>
</comment>
<comment type="interaction">
    <interactant intactId="EBI-752069">
        <id>Q9H5X1</id>
    </interactant>
    <interactant intactId="EBI-17589229">
        <id>Q6NTF9-3</id>
        <label>RHBDD2</label>
    </interactant>
    <organismsDiffer>false</organismsDiffer>
    <experiments>3</experiments>
</comment>
<comment type="interaction">
    <interactant intactId="EBI-752069">
        <id>Q9H5X1</id>
    </interactant>
    <interactant intactId="EBI-23709068">
        <id>Q9NVD3-4</id>
        <label>SETD4</label>
    </interactant>
    <organismsDiffer>false</organismsDiffer>
    <experiments>3</experiments>
</comment>
<comment type="interaction">
    <interactant intactId="EBI-752069">
        <id>Q9H5X1</id>
    </interactant>
    <interactant intactId="EBI-13384308">
        <id>H3BQL7</id>
        <label>SIN3A</label>
    </interactant>
    <organismsDiffer>false</organismsDiffer>
    <experiments>3</experiments>
</comment>
<comment type="interaction">
    <interactant intactId="EBI-752069">
        <id>Q9H5X1</id>
    </interactant>
    <interactant intactId="EBI-11603430">
        <id>Q6PL24</id>
        <label>TMED8</label>
    </interactant>
    <organismsDiffer>false</organismsDiffer>
    <experiments>6</experiments>
</comment>
<comment type="interaction">
    <interactant intactId="EBI-752069">
        <id>Q9H5X1</id>
    </interactant>
    <interactant intactId="EBI-1044859">
        <id>Q9UBN6</id>
        <label>TNFRSF10D</label>
    </interactant>
    <organismsDiffer>false</organismsDiffer>
    <experiments>3</experiments>
</comment>
<comment type="interaction">
    <interactant intactId="EBI-752069">
        <id>Q9H5X1</id>
    </interactant>
    <interactant intactId="EBI-722343">
        <id>Q15836</id>
        <label>VAMP3</label>
    </interactant>
    <organismsDiffer>false</organismsDiffer>
    <experiments>3</experiments>
</comment>
<comment type="subcellular location">
    <subcellularLocation>
        <location evidence="2">Cytoplasm</location>
    </subcellularLocation>
</comment>
<comment type="alternative products">
    <event type="alternative splicing"/>
    <isoform>
        <id>Q9H5X1-1</id>
        <name>1</name>
        <sequence type="displayed"/>
    </isoform>
    <isoform>
        <id>Q9H5X1-2</id>
        <name>2</name>
        <sequence type="described" ref="VSP_042683"/>
    </isoform>
</comment>
<comment type="tissue specificity">
    <text evidence="2">Substantially enriched in macrophages.</text>
</comment>
<comment type="similarity">
    <text evidence="7">Belongs to the MIP18 family.</text>
</comment>
<feature type="chain" id="PRO_0000212689" description="Cytosolic iron-sulfur assembly component 2A">
    <location>
        <begin position="1"/>
        <end position="160"/>
    </location>
</feature>
<feature type="binding site">
    <location>
        <position position="89"/>
    </location>
    <ligand>
        <name>Zn(2+)</name>
        <dbReference type="ChEBI" id="CHEBI:29105"/>
        <label>1</label>
        <note>ligand shared between dimeric partners</note>
    </ligand>
</feature>
<feature type="binding site">
    <location>
        <position position="89"/>
    </location>
    <ligand>
        <name>Zn(2+)</name>
        <dbReference type="ChEBI" id="CHEBI:29105"/>
        <label>2</label>
        <note>ligand shared between dimeric partners</note>
    </ligand>
</feature>
<feature type="binding site">
    <location>
        <position position="123"/>
    </location>
    <ligand>
        <name>Zn(2+)</name>
        <dbReference type="ChEBI" id="CHEBI:29105"/>
        <label>1</label>
        <note>ligand shared between dimeric partners</note>
    </ligand>
</feature>
<feature type="binding site">
    <location>
        <position position="123"/>
    </location>
    <ligand>
        <name>Zn(2+)</name>
        <dbReference type="ChEBI" id="CHEBI:29105"/>
        <label>2</label>
        <note>ligand shared between dimeric partners</note>
    </ligand>
</feature>
<feature type="binding site">
    <location>
        <position position="150"/>
    </location>
    <ligand>
        <name>Zn(2+)</name>
        <dbReference type="ChEBI" id="CHEBI:29105"/>
        <label>1</label>
        <note>ligand shared between dimeric partners</note>
    </ligand>
</feature>
<feature type="binding site">
    <location>
        <position position="150"/>
    </location>
    <ligand>
        <name>Zn(2+)</name>
        <dbReference type="ChEBI" id="CHEBI:29105"/>
        <label>2</label>
        <note>ligand shared between dimeric partners</note>
    </ligand>
</feature>
<feature type="binding site">
    <location>
        <position position="153"/>
    </location>
    <ligand>
        <name>Zn(2+)</name>
        <dbReference type="ChEBI" id="CHEBI:29105"/>
        <label>1</label>
        <note>ligand shared between dimeric partners</note>
    </ligand>
</feature>
<feature type="binding site">
    <location>
        <position position="153"/>
    </location>
    <ligand>
        <name>Zn(2+)</name>
        <dbReference type="ChEBI" id="CHEBI:29105"/>
        <label>2</label>
        <note>ligand shared between dimeric partners</note>
    </ligand>
</feature>
<feature type="splice variant" id="VSP_042683" description="In isoform 2." evidence="5">
    <original>GLCLRVKLQRCLPFKHKLEIYISEGTHSTEEDINKQINDKERVAAAMENPNLREIVEQCVLEPD</original>
    <variation>VGNLHF</variation>
    <location>
        <begin position="97"/>
        <end position="160"/>
    </location>
</feature>
<feature type="helix" evidence="10">
    <location>
        <begin position="31"/>
        <end position="44"/>
    </location>
</feature>
<feature type="strand" evidence="10">
    <location>
        <begin position="50"/>
        <end position="55"/>
    </location>
</feature>
<feature type="turn" evidence="10">
    <location>
        <begin position="56"/>
        <end position="60"/>
    </location>
</feature>
<feature type="helix" evidence="10">
    <location>
        <begin position="64"/>
        <end position="66"/>
    </location>
</feature>
<feature type="strand" evidence="10">
    <location>
        <begin position="67"/>
        <end position="73"/>
    </location>
</feature>
<feature type="strand" evidence="10">
    <location>
        <begin position="76"/>
        <end position="81"/>
    </location>
</feature>
<feature type="strand" evidence="9">
    <location>
        <begin position="86"/>
        <end position="88"/>
    </location>
</feature>
<feature type="helix" evidence="10">
    <location>
        <begin position="92"/>
        <end position="107"/>
    </location>
</feature>
<feature type="strand" evidence="11">
    <location>
        <begin position="112"/>
        <end position="120"/>
    </location>
</feature>
<feature type="strand" evidence="11">
    <location>
        <begin position="122"/>
        <end position="124"/>
    </location>
</feature>
<feature type="helix" evidence="10">
    <location>
        <begin position="129"/>
        <end position="134"/>
    </location>
</feature>
<feature type="helix" evidence="10">
    <location>
        <begin position="136"/>
        <end position="144"/>
    </location>
</feature>
<feature type="helix" evidence="10">
    <location>
        <begin position="146"/>
        <end position="156"/>
    </location>
</feature>
<accession>Q9H5X1</accession>
<accession>A6NKS1</accession>
<accession>B2R5F8</accession>
<accession>B7Z8Z5</accession>
<keyword id="KW-0002">3D-structure</keyword>
<keyword id="KW-0025">Alternative splicing</keyword>
<keyword id="KW-0159">Chromosome partition</keyword>
<keyword id="KW-0963">Cytoplasm</keyword>
<keyword id="KW-0479">Metal-binding</keyword>
<keyword id="KW-1267">Proteomics identification</keyword>
<keyword id="KW-1185">Reference proteome</keyword>
<keyword id="KW-0862">Zinc</keyword>
<organism>
    <name type="scientific">Homo sapiens</name>
    <name type="common">Human</name>
    <dbReference type="NCBI Taxonomy" id="9606"/>
    <lineage>
        <taxon>Eukaryota</taxon>
        <taxon>Metazoa</taxon>
        <taxon>Chordata</taxon>
        <taxon>Craniata</taxon>
        <taxon>Vertebrata</taxon>
        <taxon>Euteleostomi</taxon>
        <taxon>Mammalia</taxon>
        <taxon>Eutheria</taxon>
        <taxon>Euarchontoglires</taxon>
        <taxon>Primates</taxon>
        <taxon>Haplorrhini</taxon>
        <taxon>Catarrhini</taxon>
        <taxon>Hominidae</taxon>
        <taxon>Homo</taxon>
    </lineage>
</organism>
<evidence type="ECO:0000250" key="1"/>
<evidence type="ECO:0000269" key="2">
    <source>
    </source>
</evidence>
<evidence type="ECO:0000269" key="3">
    <source>
    </source>
</evidence>
<evidence type="ECO:0000269" key="4">
    <source>
    </source>
</evidence>
<evidence type="ECO:0000303" key="5">
    <source>
    </source>
</evidence>
<evidence type="ECO:0000303" key="6">
    <source>
    </source>
</evidence>
<evidence type="ECO:0000305" key="7"/>
<evidence type="ECO:0000312" key="8">
    <source>
        <dbReference type="HGNC" id="HGNC:26235"/>
    </source>
</evidence>
<evidence type="ECO:0007829" key="9">
    <source>
        <dbReference type="PDB" id="2M5H"/>
    </source>
</evidence>
<evidence type="ECO:0007829" key="10">
    <source>
        <dbReference type="PDB" id="3UX2"/>
    </source>
</evidence>
<evidence type="ECO:0007829" key="11">
    <source>
        <dbReference type="PDB" id="3UX3"/>
    </source>
</evidence>
<gene>
    <name evidence="8" type="primary">CIAO2A</name>
    <name evidence="6" type="synonym">CIA2A</name>
    <name evidence="8" type="synonym">FAM96A</name>
</gene>
<sequence>MQRVSGLLSWTLSRVLWLSGLSEPGAARQPRIMEEKALEVYDLIRTIRDPEKPNTLEELEVVSESCVEVQEINEEEYLVIIRFTPTVPHCSLATLIGLCLRVKLQRCLPFKHKLEIYISEGTHSTEEDINKQINDKERVAAAMENPNLREIVEQCVLEPD</sequence>
<name>CIA2A_HUMAN</name>
<protein>
    <recommendedName>
        <fullName evidence="7">Cytosolic iron-sulfur assembly component 2A</fullName>
    </recommendedName>
    <alternativeName>
        <fullName>MIP18 family protein FAM96A</fullName>
    </alternativeName>
</protein>